<proteinExistence type="inferred from homology"/>
<evidence type="ECO:0000255" key="1">
    <source>
        <dbReference type="HAMAP-Rule" id="MF_00135"/>
    </source>
</evidence>
<name>TRPF_MARSD</name>
<gene>
    <name evidence="1" type="primary">trpF</name>
    <name type="ordered locus">Desal_3056</name>
</gene>
<dbReference type="EC" id="5.3.1.24" evidence="1"/>
<dbReference type="EMBL" id="CP001649">
    <property type="protein sequence ID" value="ACS81108.1"/>
    <property type="molecule type" value="Genomic_DNA"/>
</dbReference>
<dbReference type="RefSeq" id="WP_015852924.1">
    <property type="nucleotide sequence ID" value="NC_012881.1"/>
</dbReference>
<dbReference type="SMR" id="C6C1D3"/>
<dbReference type="STRING" id="526222.Desal_3056"/>
<dbReference type="KEGG" id="dsa:Desal_3056"/>
<dbReference type="eggNOG" id="COG0135">
    <property type="taxonomic scope" value="Bacteria"/>
</dbReference>
<dbReference type="HOGENOM" id="CLU_076364_1_2_7"/>
<dbReference type="OrthoDB" id="9796196at2"/>
<dbReference type="UniPathway" id="UPA00035">
    <property type="reaction ID" value="UER00042"/>
</dbReference>
<dbReference type="Proteomes" id="UP000002601">
    <property type="component" value="Chromosome"/>
</dbReference>
<dbReference type="GO" id="GO:0004640">
    <property type="term" value="F:phosphoribosylanthranilate isomerase activity"/>
    <property type="evidence" value="ECO:0007669"/>
    <property type="project" value="UniProtKB-UniRule"/>
</dbReference>
<dbReference type="GO" id="GO:0000162">
    <property type="term" value="P:L-tryptophan biosynthetic process"/>
    <property type="evidence" value="ECO:0007669"/>
    <property type="project" value="UniProtKB-UniRule"/>
</dbReference>
<dbReference type="CDD" id="cd00405">
    <property type="entry name" value="PRAI"/>
    <property type="match status" value="1"/>
</dbReference>
<dbReference type="Gene3D" id="3.20.20.70">
    <property type="entry name" value="Aldolase class I"/>
    <property type="match status" value="1"/>
</dbReference>
<dbReference type="HAMAP" id="MF_00135">
    <property type="entry name" value="PRAI"/>
    <property type="match status" value="1"/>
</dbReference>
<dbReference type="InterPro" id="IPR013785">
    <property type="entry name" value="Aldolase_TIM"/>
</dbReference>
<dbReference type="InterPro" id="IPR001240">
    <property type="entry name" value="PRAI_dom"/>
</dbReference>
<dbReference type="InterPro" id="IPR011060">
    <property type="entry name" value="RibuloseP-bd_barrel"/>
</dbReference>
<dbReference type="InterPro" id="IPR044643">
    <property type="entry name" value="TrpF_fam"/>
</dbReference>
<dbReference type="PANTHER" id="PTHR42894">
    <property type="entry name" value="N-(5'-PHOSPHORIBOSYL)ANTHRANILATE ISOMERASE"/>
    <property type="match status" value="1"/>
</dbReference>
<dbReference type="PANTHER" id="PTHR42894:SF1">
    <property type="entry name" value="N-(5'-PHOSPHORIBOSYL)ANTHRANILATE ISOMERASE"/>
    <property type="match status" value="1"/>
</dbReference>
<dbReference type="Pfam" id="PF00697">
    <property type="entry name" value="PRAI"/>
    <property type="match status" value="1"/>
</dbReference>
<dbReference type="SUPFAM" id="SSF51366">
    <property type="entry name" value="Ribulose-phoshate binding barrel"/>
    <property type="match status" value="1"/>
</dbReference>
<accession>C6C1D3</accession>
<sequence>MSLLVKVCGMTSKEDATMCEQLGVDFLGFIFHPSSPRNVDAAFARSVKTDGAKKVGVFVKQSATEVIETLKNGQLDFAQLHGGQNEEFCKAVGKERVIKVLWPQKYDSVKEFQADIDRFVPHCTYLLFDAGKSGGGHGIAMEFEVFKDVTIPVPWLLAGGLSAENLREALDTAQPNGVDLNSGVESEPGKKERNKLAAAFAAIGQ</sequence>
<comment type="catalytic activity">
    <reaction evidence="1">
        <text>N-(5-phospho-beta-D-ribosyl)anthranilate = 1-(2-carboxyphenylamino)-1-deoxy-D-ribulose 5-phosphate</text>
        <dbReference type="Rhea" id="RHEA:21540"/>
        <dbReference type="ChEBI" id="CHEBI:18277"/>
        <dbReference type="ChEBI" id="CHEBI:58613"/>
        <dbReference type="EC" id="5.3.1.24"/>
    </reaction>
</comment>
<comment type="pathway">
    <text evidence="1">Amino-acid biosynthesis; L-tryptophan biosynthesis; L-tryptophan from chorismate: step 3/5.</text>
</comment>
<comment type="similarity">
    <text evidence="1">Belongs to the TrpF family.</text>
</comment>
<reference key="1">
    <citation type="submission" date="2009-06" db="EMBL/GenBank/DDBJ databases">
        <title>Complete sequence of Desulfovibrio salexigens DSM 2638.</title>
        <authorList>
            <consortium name="US DOE Joint Genome Institute"/>
            <person name="Lucas S."/>
            <person name="Copeland A."/>
            <person name="Lapidus A."/>
            <person name="Glavina del Rio T."/>
            <person name="Tice H."/>
            <person name="Bruce D."/>
            <person name="Goodwin L."/>
            <person name="Pitluck S."/>
            <person name="Munk A.C."/>
            <person name="Brettin T."/>
            <person name="Detter J.C."/>
            <person name="Han C."/>
            <person name="Tapia R."/>
            <person name="Larimer F."/>
            <person name="Land M."/>
            <person name="Hauser L."/>
            <person name="Kyrpides N."/>
            <person name="Anderson I."/>
            <person name="Wall J.D."/>
            <person name="Arkin A.P."/>
            <person name="Dehal P."/>
            <person name="Chivian D."/>
            <person name="Giles B."/>
            <person name="Hazen T.C."/>
        </authorList>
    </citation>
    <scope>NUCLEOTIDE SEQUENCE [LARGE SCALE GENOMIC DNA]</scope>
    <source>
        <strain>ATCC 14822 / DSM 2638 / NCIMB 8403 / VKM B-1763</strain>
    </source>
</reference>
<feature type="chain" id="PRO_1000203207" description="N-(5'-phosphoribosyl)anthranilate isomerase">
    <location>
        <begin position="1"/>
        <end position="205"/>
    </location>
</feature>
<protein>
    <recommendedName>
        <fullName evidence="1">N-(5'-phosphoribosyl)anthranilate isomerase</fullName>
        <shortName evidence="1">PRAI</shortName>
        <ecNumber evidence="1">5.3.1.24</ecNumber>
    </recommendedName>
</protein>
<keyword id="KW-0028">Amino-acid biosynthesis</keyword>
<keyword id="KW-0057">Aromatic amino acid biosynthesis</keyword>
<keyword id="KW-0413">Isomerase</keyword>
<keyword id="KW-1185">Reference proteome</keyword>
<keyword id="KW-0822">Tryptophan biosynthesis</keyword>
<organism>
    <name type="scientific">Maridesulfovibrio salexigens (strain ATCC 14822 / DSM 2638 / NCIMB 8403 / VKM B-1763)</name>
    <name type="common">Desulfovibrio salexigens</name>
    <dbReference type="NCBI Taxonomy" id="526222"/>
    <lineage>
        <taxon>Bacteria</taxon>
        <taxon>Pseudomonadati</taxon>
        <taxon>Thermodesulfobacteriota</taxon>
        <taxon>Desulfovibrionia</taxon>
        <taxon>Desulfovibrionales</taxon>
        <taxon>Desulfovibrionaceae</taxon>
        <taxon>Maridesulfovibrio</taxon>
    </lineage>
</organism>